<protein>
    <recommendedName>
        <fullName evidence="1">Large ribosomal subunit protein uL22</fullName>
    </recommendedName>
    <alternativeName>
        <fullName evidence="2">50S ribosomal protein L22</fullName>
    </alternativeName>
</protein>
<proteinExistence type="inferred from homology"/>
<organism>
    <name type="scientific">Oceanobacillus iheyensis (strain DSM 14371 / CIP 107618 / JCM 11309 / KCTC 3954 / HTE831)</name>
    <dbReference type="NCBI Taxonomy" id="221109"/>
    <lineage>
        <taxon>Bacteria</taxon>
        <taxon>Bacillati</taxon>
        <taxon>Bacillota</taxon>
        <taxon>Bacilli</taxon>
        <taxon>Bacillales</taxon>
        <taxon>Bacillaceae</taxon>
        <taxon>Oceanobacillus</taxon>
    </lineage>
</organism>
<name>RL22_OCEIH</name>
<evidence type="ECO:0000255" key="1">
    <source>
        <dbReference type="HAMAP-Rule" id="MF_01331"/>
    </source>
</evidence>
<evidence type="ECO:0000305" key="2"/>
<sequence length="113" mass="12398">MQAKAVAKSVRIAPRKVRLVVDLIRGKEVGEAIAILNHTQRGASPVVEKVLKSAIANAEHNYEMDADSLVISEAFVNEGATLKRFRPRAQGRASRINKRTSHITVVVTEKKEG</sequence>
<comment type="function">
    <text evidence="1">This protein binds specifically to 23S rRNA; its binding is stimulated by other ribosomal proteins, e.g. L4, L17, and L20. It is important during the early stages of 50S assembly. It makes multiple contacts with different domains of the 23S rRNA in the assembled 50S subunit and ribosome (By similarity).</text>
</comment>
<comment type="function">
    <text evidence="1">The globular domain of the protein is located near the polypeptide exit tunnel on the outside of the subunit, while an extended beta-hairpin is found that lines the wall of the exit tunnel in the center of the 70S ribosome.</text>
</comment>
<comment type="subunit">
    <text evidence="1">Part of the 50S ribosomal subunit.</text>
</comment>
<comment type="similarity">
    <text evidence="1">Belongs to the universal ribosomal protein uL22 family.</text>
</comment>
<accession>Q8ETX7</accession>
<reference key="1">
    <citation type="journal article" date="2002" name="Nucleic Acids Res.">
        <title>Genome sequence of Oceanobacillus iheyensis isolated from the Iheya Ridge and its unexpected adaptive capabilities to extreme environments.</title>
        <authorList>
            <person name="Takami H."/>
            <person name="Takaki Y."/>
            <person name="Uchiyama I."/>
        </authorList>
    </citation>
    <scope>NUCLEOTIDE SEQUENCE [LARGE SCALE GENOMIC DNA]</scope>
    <source>
        <strain>DSM 14371 / CIP 107618 / JCM 11309 / KCTC 3954 / HTE831</strain>
    </source>
</reference>
<feature type="chain" id="PRO_0000125191" description="Large ribosomal subunit protein uL22">
    <location>
        <begin position="1"/>
        <end position="113"/>
    </location>
</feature>
<dbReference type="EMBL" id="BA000028">
    <property type="protein sequence ID" value="BAC12080.1"/>
    <property type="molecule type" value="Genomic_DNA"/>
</dbReference>
<dbReference type="RefSeq" id="WP_011064527.1">
    <property type="nucleotide sequence ID" value="NC_004193.1"/>
</dbReference>
<dbReference type="SMR" id="Q8ETX7"/>
<dbReference type="STRING" id="221109.gene:10732314"/>
<dbReference type="KEGG" id="oih:OB0124"/>
<dbReference type="eggNOG" id="COG0091">
    <property type="taxonomic scope" value="Bacteria"/>
</dbReference>
<dbReference type="HOGENOM" id="CLU_083987_3_3_9"/>
<dbReference type="OrthoDB" id="9805969at2"/>
<dbReference type="PhylomeDB" id="Q8ETX7"/>
<dbReference type="Proteomes" id="UP000000822">
    <property type="component" value="Chromosome"/>
</dbReference>
<dbReference type="GO" id="GO:0022625">
    <property type="term" value="C:cytosolic large ribosomal subunit"/>
    <property type="evidence" value="ECO:0007669"/>
    <property type="project" value="TreeGrafter"/>
</dbReference>
<dbReference type="GO" id="GO:0019843">
    <property type="term" value="F:rRNA binding"/>
    <property type="evidence" value="ECO:0007669"/>
    <property type="project" value="UniProtKB-UniRule"/>
</dbReference>
<dbReference type="GO" id="GO:0003735">
    <property type="term" value="F:structural constituent of ribosome"/>
    <property type="evidence" value="ECO:0007669"/>
    <property type="project" value="InterPro"/>
</dbReference>
<dbReference type="GO" id="GO:0006412">
    <property type="term" value="P:translation"/>
    <property type="evidence" value="ECO:0007669"/>
    <property type="project" value="UniProtKB-UniRule"/>
</dbReference>
<dbReference type="CDD" id="cd00336">
    <property type="entry name" value="Ribosomal_L22"/>
    <property type="match status" value="1"/>
</dbReference>
<dbReference type="FunFam" id="3.90.470.10:FF:000001">
    <property type="entry name" value="50S ribosomal protein L22"/>
    <property type="match status" value="1"/>
</dbReference>
<dbReference type="Gene3D" id="3.90.470.10">
    <property type="entry name" value="Ribosomal protein L22/L17"/>
    <property type="match status" value="1"/>
</dbReference>
<dbReference type="HAMAP" id="MF_01331_B">
    <property type="entry name" value="Ribosomal_uL22_B"/>
    <property type="match status" value="1"/>
</dbReference>
<dbReference type="InterPro" id="IPR001063">
    <property type="entry name" value="Ribosomal_uL22"/>
</dbReference>
<dbReference type="InterPro" id="IPR005727">
    <property type="entry name" value="Ribosomal_uL22_bac/chlpt-type"/>
</dbReference>
<dbReference type="InterPro" id="IPR047867">
    <property type="entry name" value="Ribosomal_uL22_bac/org-type"/>
</dbReference>
<dbReference type="InterPro" id="IPR018260">
    <property type="entry name" value="Ribosomal_uL22_CS"/>
</dbReference>
<dbReference type="InterPro" id="IPR036394">
    <property type="entry name" value="Ribosomal_uL22_sf"/>
</dbReference>
<dbReference type="NCBIfam" id="TIGR01044">
    <property type="entry name" value="rplV_bact"/>
    <property type="match status" value="1"/>
</dbReference>
<dbReference type="PANTHER" id="PTHR13501">
    <property type="entry name" value="CHLOROPLAST 50S RIBOSOMAL PROTEIN L22-RELATED"/>
    <property type="match status" value="1"/>
</dbReference>
<dbReference type="PANTHER" id="PTHR13501:SF8">
    <property type="entry name" value="LARGE RIBOSOMAL SUBUNIT PROTEIN UL22M"/>
    <property type="match status" value="1"/>
</dbReference>
<dbReference type="Pfam" id="PF00237">
    <property type="entry name" value="Ribosomal_L22"/>
    <property type="match status" value="1"/>
</dbReference>
<dbReference type="SUPFAM" id="SSF54843">
    <property type="entry name" value="Ribosomal protein L22"/>
    <property type="match status" value="1"/>
</dbReference>
<dbReference type="PROSITE" id="PS00464">
    <property type="entry name" value="RIBOSOMAL_L22"/>
    <property type="match status" value="1"/>
</dbReference>
<keyword id="KW-1185">Reference proteome</keyword>
<keyword id="KW-0687">Ribonucleoprotein</keyword>
<keyword id="KW-0689">Ribosomal protein</keyword>
<keyword id="KW-0694">RNA-binding</keyword>
<keyword id="KW-0699">rRNA-binding</keyword>
<gene>
    <name evidence="1" type="primary">rplV</name>
    <name type="ordered locus">OB0124</name>
</gene>